<organism>
    <name type="scientific">Salinispora arenicola (strain CNS-205)</name>
    <dbReference type="NCBI Taxonomy" id="391037"/>
    <lineage>
        <taxon>Bacteria</taxon>
        <taxon>Bacillati</taxon>
        <taxon>Actinomycetota</taxon>
        <taxon>Actinomycetes</taxon>
        <taxon>Micromonosporales</taxon>
        <taxon>Micromonosporaceae</taxon>
        <taxon>Salinispora</taxon>
    </lineage>
</organism>
<sequence>MASTPWISFTTDYGLADGFVAACHGVLARLAPTARVIDVTHLVPPGDVRRGAAVLAQTVPYLPAAVHVAVVDPGVGTARRAIALTAGNGLLVGPDNGLLLDAATALGGVDAAVELTNPDWLGARMSATFHGRDVFAPVAARLALGAPLADAGPAVEPGALVRLPTPLVQPETDGFTAEVLTVDHFGNVQLAATGALLESLPRSLRVAHRPAVHARTFDDAPPGGLLVHVDSAGLVAVAVNGGRAADLLAVTPGDQLRVTAG</sequence>
<dbReference type="EC" id="3.13.2.3" evidence="1 8 9"/>
<dbReference type="EMBL" id="CP000850">
    <property type="protein sequence ID" value="ABV97265.1"/>
    <property type="molecule type" value="Genomic_DNA"/>
</dbReference>
<dbReference type="SMR" id="A8M783"/>
<dbReference type="STRING" id="391037.Sare_1364"/>
<dbReference type="KEGG" id="saq:Sare_1364"/>
<dbReference type="PATRIC" id="fig|391037.6.peg.1387"/>
<dbReference type="eggNOG" id="COG1912">
    <property type="taxonomic scope" value="Bacteria"/>
</dbReference>
<dbReference type="HOGENOM" id="CLU_059734_1_0_11"/>
<dbReference type="OrthoDB" id="9792195at2"/>
<dbReference type="BioCyc" id="MetaCyc:MONOMER-20362"/>
<dbReference type="GO" id="GO:0016787">
    <property type="term" value="F:hydrolase activity"/>
    <property type="evidence" value="ECO:0007669"/>
    <property type="project" value="UniProtKB-KW"/>
</dbReference>
<dbReference type="Gene3D" id="2.40.30.90">
    <property type="entry name" value="Bacterial fluorinating enzyme like"/>
    <property type="match status" value="1"/>
</dbReference>
<dbReference type="Gene3D" id="3.40.50.10790">
    <property type="entry name" value="S-adenosyl-l-methionine hydroxide adenosyltransferase, N-terminal"/>
    <property type="match status" value="1"/>
</dbReference>
<dbReference type="InterPro" id="IPR046470">
    <property type="entry name" value="SAM_HAT_C"/>
</dbReference>
<dbReference type="InterPro" id="IPR046469">
    <property type="entry name" value="SAM_HAT_N"/>
</dbReference>
<dbReference type="InterPro" id="IPR002747">
    <property type="entry name" value="SAM_OH_AdoTrfase"/>
</dbReference>
<dbReference type="InterPro" id="IPR023227">
    <property type="entry name" value="SAM_OH_AdoTrfase_C_sf"/>
</dbReference>
<dbReference type="InterPro" id="IPR023228">
    <property type="entry name" value="SAM_OH_AdoTrfase_N_sf"/>
</dbReference>
<dbReference type="PANTHER" id="PTHR35092">
    <property type="entry name" value="CHLORINASE MJ1651"/>
    <property type="match status" value="1"/>
</dbReference>
<dbReference type="PANTHER" id="PTHR35092:SF1">
    <property type="entry name" value="CHLORINASE MJ1651"/>
    <property type="match status" value="1"/>
</dbReference>
<dbReference type="Pfam" id="PF20257">
    <property type="entry name" value="SAM_HAT_C"/>
    <property type="match status" value="1"/>
</dbReference>
<dbReference type="Pfam" id="PF01887">
    <property type="entry name" value="SAM_HAT_N"/>
    <property type="match status" value="1"/>
</dbReference>
<dbReference type="PIRSF" id="PIRSF006779">
    <property type="entry name" value="UCP006779"/>
    <property type="match status" value="1"/>
</dbReference>
<dbReference type="SUPFAM" id="SSF101852">
    <property type="entry name" value="Bacterial fluorinating enzyme, C-terminal domain"/>
    <property type="match status" value="1"/>
</dbReference>
<dbReference type="SUPFAM" id="SSF102522">
    <property type="entry name" value="Bacterial fluorinating enzyme, N-terminal domain"/>
    <property type="match status" value="1"/>
</dbReference>
<feature type="chain" id="PRO_0000451806" description="(R)-S-adenosyl-L-methionine hydrolase">
    <location>
        <begin position="1"/>
        <end position="261"/>
    </location>
</feature>
<feature type="binding site" evidence="2">
    <location>
        <position position="12"/>
    </location>
    <ligand>
        <name>adenosine</name>
        <dbReference type="ChEBI" id="CHEBI:16335"/>
    </ligand>
</feature>
<feature type="binding site" evidence="2">
    <location>
        <position position="72"/>
    </location>
    <ligand>
        <name>adenosine</name>
        <dbReference type="ChEBI" id="CHEBI:16335"/>
    </ligand>
</feature>
<feature type="binding site" evidence="2">
    <location>
        <position position="187"/>
    </location>
    <ligand>
        <name>(R)-S-adenosyl-L-methionine</name>
        <dbReference type="ChEBI" id="CHEBI:142093"/>
    </ligand>
</feature>
<feature type="binding site" evidence="2">
    <location>
        <position position="187"/>
    </location>
    <ligand>
        <name>adenosine</name>
        <dbReference type="ChEBI" id="CHEBI:16335"/>
    </ligand>
</feature>
<feature type="binding site" evidence="2">
    <location>
        <position position="231"/>
    </location>
    <ligand>
        <name>(R)-S-adenosyl-L-methionine</name>
        <dbReference type="ChEBI" id="CHEBI:142093"/>
    </ligand>
</feature>
<feature type="binding site" evidence="2">
    <location>
        <position position="239"/>
    </location>
    <ligand>
        <name>(R)-S-adenosyl-L-methionine</name>
        <dbReference type="ChEBI" id="CHEBI:142093"/>
    </ligand>
</feature>
<feature type="binding site" evidence="2">
    <location>
        <position position="239"/>
    </location>
    <ligand>
        <name>adenosine</name>
        <dbReference type="ChEBI" id="CHEBI:16335"/>
    </ligand>
</feature>
<feature type="site" description="Important for activity" evidence="9">
    <location>
        <position position="72"/>
    </location>
</feature>
<feature type="site" description="Important for activity" evidence="9">
    <location>
        <position position="79"/>
    </location>
</feature>
<feature type="site" description="Important for activity" evidence="9">
    <location>
        <position position="130"/>
    </location>
</feature>
<feature type="mutagenesis site" description="Loss of activity." evidence="4">
    <original>D</original>
    <variation>A</variation>
    <location>
        <position position="72"/>
    </location>
</feature>
<feature type="mutagenesis site" description="Almost loss of activity." evidence="4">
    <original>R</original>
    <variation>A</variation>
    <location>
        <position position="79"/>
    </location>
</feature>
<feature type="mutagenesis site" description="75% decrease in catalytic efficiency." evidence="4">
    <original>H</original>
    <variation>A</variation>
    <location>
        <position position="130"/>
    </location>
</feature>
<feature type="mutagenesis site" description="95% decrease in catalytic efficiency." evidence="4">
    <original>H</original>
    <variation>Y</variation>
    <location>
        <position position="130"/>
    </location>
</feature>
<evidence type="ECO:0000250" key="1">
    <source>
        <dbReference type="UniProtKB" id="A4X4S2"/>
    </source>
</evidence>
<evidence type="ECO:0000250" key="2">
    <source>
        <dbReference type="UniProtKB" id="O58212"/>
    </source>
</evidence>
<evidence type="ECO:0000269" key="3">
    <source>
    </source>
</evidence>
<evidence type="ECO:0000269" key="4">
    <source>
    </source>
</evidence>
<evidence type="ECO:0000303" key="5">
    <source>
    </source>
</evidence>
<evidence type="ECO:0000303" key="6">
    <source>
    </source>
</evidence>
<evidence type="ECO:0000305" key="7"/>
<evidence type="ECO:0000305" key="8">
    <source>
    </source>
</evidence>
<evidence type="ECO:0000305" key="9">
    <source>
    </source>
</evidence>
<evidence type="ECO:0000312" key="10">
    <source>
        <dbReference type="EMBL" id="ABV97265.1"/>
    </source>
</evidence>
<keyword id="KW-0378">Hydrolase</keyword>
<keyword id="KW-0949">S-adenosyl-L-methionine</keyword>
<proteinExistence type="evidence at protein level"/>
<accession>A8M783</accession>
<comment type="function">
    <text evidence="1 3 4">Catalyzes the hydrolysis of S-adenosyl-L-methionine (SAM) into adenosine and L-methionine (PubMed:18720493, PubMed:19739191). Is likely stereoselective, specifically hydrolyzing (R)-S-adenosyl-L-methionine ((R)-SAM), the inactive form of the ubiquitous cofactor SAM, and not the active form of SAM, (S)-S-adenosyl-L-methionine (By similarity). Probaly plays a role in preventing accumulation of (R)-S-adenosyl-L-methionine in cells; maintenance of (S)-S-denosyl-L-methionine homochirality is important for cellular health given that the (R)-form is largely inactive as a methyl donor and can function as an inhibitor of methyltransferases (By similarity). Shows very slow iodinase activity in vitro (PubMed:18720493).</text>
</comment>
<comment type="catalytic activity">
    <reaction evidence="1 8 9">
        <text>(R)-S-adenosyl-L-methionine + H2O = adenosine + L-methionine + H(+)</text>
        <dbReference type="Rhea" id="RHEA:67240"/>
        <dbReference type="ChEBI" id="CHEBI:15377"/>
        <dbReference type="ChEBI" id="CHEBI:15378"/>
        <dbReference type="ChEBI" id="CHEBI:16335"/>
        <dbReference type="ChEBI" id="CHEBI:57844"/>
        <dbReference type="ChEBI" id="CHEBI:142093"/>
        <dbReference type="EC" id="3.13.2.3"/>
    </reaction>
    <physiologicalReaction direction="left-to-right" evidence="1">
        <dbReference type="Rhea" id="RHEA:67241"/>
    </physiologicalReaction>
</comment>
<comment type="activity regulation">
    <text evidence="3">Activity is inhibited by chloride.</text>
</comment>
<comment type="biophysicochemical properties">
    <kinetics>
        <KM evidence="3">1.6 uM for S-adenosyl-L-methionine</KM>
        <KM evidence="4">1 uM for S-adenosyl-L-methionine</KM>
        <text evidence="3 4">kcat is 0.5 min(-1) (PubMed:18720493). kcat is 0.45 min(-1) (PubMed:19739191).</text>
    </kinetics>
    <phDependence>
        <text evidence="3">Optimum pH is 8.</text>
    </phDependence>
</comment>
<comment type="similarity">
    <text evidence="7">Belongs to the SAM hydrolase / SAM-dependent halogenase family.</text>
</comment>
<reference key="1">
    <citation type="submission" date="2007-10" db="EMBL/GenBank/DDBJ databases">
        <title>Complete sequence of Salinispora arenicola CNS-205.</title>
        <authorList>
            <consortium name="US DOE Joint Genome Institute"/>
            <person name="Copeland A."/>
            <person name="Lucas S."/>
            <person name="Lapidus A."/>
            <person name="Barry K."/>
            <person name="Glavina del Rio T."/>
            <person name="Dalin E."/>
            <person name="Tice H."/>
            <person name="Pitluck S."/>
            <person name="Foster B."/>
            <person name="Schmutz J."/>
            <person name="Larimer F."/>
            <person name="Land M."/>
            <person name="Hauser L."/>
            <person name="Kyrpides N."/>
            <person name="Ivanova N."/>
            <person name="Jensen P.R."/>
            <person name="Moore B.S."/>
            <person name="Penn K."/>
            <person name="Jenkins C."/>
            <person name="Udwary D."/>
            <person name="Xiang L."/>
            <person name="Gontang E."/>
            <person name="Richardson P."/>
        </authorList>
    </citation>
    <scope>NUCLEOTIDE SEQUENCE [LARGE SCALE GENOMIC DNA]</scope>
    <source>
        <strain>CNS-205</strain>
    </source>
</reference>
<reference key="2">
    <citation type="journal article" date="2008" name="ChemBioChem">
        <title>S-Adenosyl-L-methionine hydrolase (adenosine-forming), a conserved bacterial and archaeal protein related to SAM-dependent halogenases.</title>
        <authorList>
            <person name="Eustaquio A.S."/>
            <person name="Haerle J."/>
            <person name="Noel J.P."/>
            <person name="Moore B.S."/>
        </authorList>
    </citation>
    <scope>FUNCTION</scope>
    <scope>CATALYTIC ACTIVITY</scope>
    <scope>ACTIVITY REGULATION</scope>
    <scope>BIOPHYSICOCHEMICAL PROPERTIES</scope>
    <source>
        <strain>CNS-205</strain>
    </source>
</reference>
<reference key="3">
    <citation type="journal article" date="2009" name="ChemBioChem">
        <title>Mechanistic insights into water activation in SAM hydroxide adenosyltransferase (duf-62).</title>
        <authorList>
            <person name="Deng H."/>
            <person name="McMahon S.A."/>
            <person name="Eustaquio A.S."/>
            <person name="Moore B.S."/>
            <person name="Naismith J.H."/>
            <person name="O'Hagan D."/>
        </authorList>
    </citation>
    <scope>FUNCTION</scope>
    <scope>CATALYTIC ACTIVITY</scope>
    <scope>BIOPHYSICOCHEMICAL PROPERTIES</scope>
    <scope>MUTAGENESIS OF ASP-72; ARG-79 AND HIS-130</scope>
</reference>
<gene>
    <name evidence="10" type="ordered locus">Sare_1364</name>
</gene>
<name>RSAMH_SALAI</name>
<protein>
    <recommendedName>
        <fullName evidence="1">(R)-S-adenosyl-L-methionine hydrolase</fullName>
        <ecNumber evidence="1 8 9">3.13.2.3</ecNumber>
    </recommendedName>
    <alternativeName>
        <fullName evidence="5">S-adenosyl-L-methionine hydrolase (adenosine-forming)</fullName>
        <shortName evidence="5">SAM hydrolase (adenosine-forming)</shortName>
    </alternativeName>
    <alternativeName>
        <fullName evidence="2">S-adenosyl-L-methionine:hydroxide adenosyltransferase</fullName>
    </alternativeName>
    <alternativeName>
        <fullName evidence="6">SAM hydroxide adenosyltransferase</fullName>
    </alternativeName>
</protein>